<gene>
    <name evidence="1" type="primary">rpmD</name>
    <name type="ordered locus">SSPA3067</name>
</gene>
<dbReference type="EMBL" id="FM200053">
    <property type="protein sequence ID" value="CAR61318.1"/>
    <property type="molecule type" value="Genomic_DNA"/>
</dbReference>
<dbReference type="RefSeq" id="WP_001140434.1">
    <property type="nucleotide sequence ID" value="NC_011147.1"/>
</dbReference>
<dbReference type="SMR" id="B5BGW8"/>
<dbReference type="GeneID" id="97393185"/>
<dbReference type="KEGG" id="sek:SSPA3067"/>
<dbReference type="HOGENOM" id="CLU_131047_1_4_6"/>
<dbReference type="Proteomes" id="UP000001869">
    <property type="component" value="Chromosome"/>
</dbReference>
<dbReference type="GO" id="GO:0022625">
    <property type="term" value="C:cytosolic large ribosomal subunit"/>
    <property type="evidence" value="ECO:0007669"/>
    <property type="project" value="TreeGrafter"/>
</dbReference>
<dbReference type="GO" id="GO:0003735">
    <property type="term" value="F:structural constituent of ribosome"/>
    <property type="evidence" value="ECO:0007669"/>
    <property type="project" value="InterPro"/>
</dbReference>
<dbReference type="GO" id="GO:0006412">
    <property type="term" value="P:translation"/>
    <property type="evidence" value="ECO:0007669"/>
    <property type="project" value="UniProtKB-UniRule"/>
</dbReference>
<dbReference type="CDD" id="cd01658">
    <property type="entry name" value="Ribosomal_L30"/>
    <property type="match status" value="1"/>
</dbReference>
<dbReference type="FunFam" id="3.30.1390.20:FF:000001">
    <property type="entry name" value="50S ribosomal protein L30"/>
    <property type="match status" value="1"/>
</dbReference>
<dbReference type="Gene3D" id="3.30.1390.20">
    <property type="entry name" value="Ribosomal protein L30, ferredoxin-like fold domain"/>
    <property type="match status" value="1"/>
</dbReference>
<dbReference type="HAMAP" id="MF_01371_B">
    <property type="entry name" value="Ribosomal_uL30_B"/>
    <property type="match status" value="1"/>
</dbReference>
<dbReference type="InterPro" id="IPR036919">
    <property type="entry name" value="Ribo_uL30_ferredoxin-like_sf"/>
</dbReference>
<dbReference type="InterPro" id="IPR005996">
    <property type="entry name" value="Ribosomal_uL30_bac-type"/>
</dbReference>
<dbReference type="InterPro" id="IPR018038">
    <property type="entry name" value="Ribosomal_uL30_CS"/>
</dbReference>
<dbReference type="InterPro" id="IPR016082">
    <property type="entry name" value="Ribosomal_uL30_ferredoxin-like"/>
</dbReference>
<dbReference type="NCBIfam" id="TIGR01308">
    <property type="entry name" value="rpmD_bact"/>
    <property type="match status" value="1"/>
</dbReference>
<dbReference type="PANTHER" id="PTHR15892:SF2">
    <property type="entry name" value="LARGE RIBOSOMAL SUBUNIT PROTEIN UL30M"/>
    <property type="match status" value="1"/>
</dbReference>
<dbReference type="PANTHER" id="PTHR15892">
    <property type="entry name" value="MITOCHONDRIAL RIBOSOMAL PROTEIN L30"/>
    <property type="match status" value="1"/>
</dbReference>
<dbReference type="Pfam" id="PF00327">
    <property type="entry name" value="Ribosomal_L30"/>
    <property type="match status" value="1"/>
</dbReference>
<dbReference type="PIRSF" id="PIRSF002211">
    <property type="entry name" value="Ribosomal_L30_bac-type"/>
    <property type="match status" value="1"/>
</dbReference>
<dbReference type="SUPFAM" id="SSF55129">
    <property type="entry name" value="Ribosomal protein L30p/L7e"/>
    <property type="match status" value="1"/>
</dbReference>
<dbReference type="PROSITE" id="PS00634">
    <property type="entry name" value="RIBOSOMAL_L30"/>
    <property type="match status" value="1"/>
</dbReference>
<protein>
    <recommendedName>
        <fullName evidence="1">Large ribosomal subunit protein uL30</fullName>
    </recommendedName>
    <alternativeName>
        <fullName evidence="2">50S ribosomal protein L30</fullName>
    </alternativeName>
</protein>
<comment type="subunit">
    <text evidence="1">Part of the 50S ribosomal subunit.</text>
</comment>
<comment type="similarity">
    <text evidence="1">Belongs to the universal ribosomal protein uL30 family.</text>
</comment>
<accession>B5BGW8</accession>
<organism>
    <name type="scientific">Salmonella paratyphi A (strain AKU_12601)</name>
    <dbReference type="NCBI Taxonomy" id="554290"/>
    <lineage>
        <taxon>Bacteria</taxon>
        <taxon>Pseudomonadati</taxon>
        <taxon>Pseudomonadota</taxon>
        <taxon>Gammaproteobacteria</taxon>
        <taxon>Enterobacterales</taxon>
        <taxon>Enterobacteriaceae</taxon>
        <taxon>Salmonella</taxon>
    </lineage>
</organism>
<name>RL30_SALPK</name>
<reference key="1">
    <citation type="journal article" date="2009" name="BMC Genomics">
        <title>Pseudogene accumulation in the evolutionary histories of Salmonella enterica serovars Paratyphi A and Typhi.</title>
        <authorList>
            <person name="Holt K.E."/>
            <person name="Thomson N.R."/>
            <person name="Wain J."/>
            <person name="Langridge G.C."/>
            <person name="Hasan R."/>
            <person name="Bhutta Z.A."/>
            <person name="Quail M.A."/>
            <person name="Norbertczak H."/>
            <person name="Walker D."/>
            <person name="Simmonds M."/>
            <person name="White B."/>
            <person name="Bason N."/>
            <person name="Mungall K."/>
            <person name="Dougan G."/>
            <person name="Parkhill J."/>
        </authorList>
    </citation>
    <scope>NUCLEOTIDE SEQUENCE [LARGE SCALE GENOMIC DNA]</scope>
    <source>
        <strain>AKU_12601</strain>
    </source>
</reference>
<evidence type="ECO:0000255" key="1">
    <source>
        <dbReference type="HAMAP-Rule" id="MF_01371"/>
    </source>
</evidence>
<evidence type="ECO:0000305" key="2"/>
<sequence length="59" mass="6514">MAKTIKITQTRSAIGRLPKHKATLLGLGLRRIGHTVEREDTPAVRGMVNAVSFMVKVEE</sequence>
<keyword id="KW-0687">Ribonucleoprotein</keyword>
<keyword id="KW-0689">Ribosomal protein</keyword>
<proteinExistence type="inferred from homology"/>
<feature type="chain" id="PRO_1000144716" description="Large ribosomal subunit protein uL30">
    <location>
        <begin position="1"/>
        <end position="59"/>
    </location>
</feature>